<accession>B7GQC3</accession>
<accession>E8MR85</accession>
<feature type="chain" id="PRO_1000146123" description="Large ribosomal subunit protein bL35">
    <location>
        <begin position="1"/>
        <end position="64"/>
    </location>
</feature>
<feature type="region of interest" description="Disordered" evidence="2">
    <location>
        <begin position="1"/>
        <end position="64"/>
    </location>
</feature>
<feature type="compositionally biased region" description="Polar residues" evidence="2">
    <location>
        <begin position="1"/>
        <end position="10"/>
    </location>
</feature>
<feature type="compositionally biased region" description="Basic residues" evidence="2">
    <location>
        <begin position="54"/>
        <end position="64"/>
    </location>
</feature>
<dbReference type="EMBL" id="CP001095">
    <property type="protein sequence ID" value="ACJ52003.1"/>
    <property type="molecule type" value="Genomic_DNA"/>
</dbReference>
<dbReference type="EMBL" id="AP010889">
    <property type="protein sequence ID" value="BAJ68510.1"/>
    <property type="molecule type" value="Genomic_DNA"/>
</dbReference>
<dbReference type="RefSeq" id="WP_007052593.1">
    <property type="nucleotide sequence ID" value="NZ_JDTT01000006.1"/>
</dbReference>
<dbReference type="SMR" id="B7GQC3"/>
<dbReference type="GeneID" id="69578457"/>
<dbReference type="KEGG" id="bln:Blon_0903"/>
<dbReference type="KEGG" id="blon:BLIJ_0920"/>
<dbReference type="PATRIC" id="fig|391904.8.peg.930"/>
<dbReference type="HOGENOM" id="CLU_169643_4_2_11"/>
<dbReference type="Proteomes" id="UP000001360">
    <property type="component" value="Chromosome"/>
</dbReference>
<dbReference type="GO" id="GO:1990904">
    <property type="term" value="C:ribonucleoprotein complex"/>
    <property type="evidence" value="ECO:0007669"/>
    <property type="project" value="UniProtKB-KW"/>
</dbReference>
<dbReference type="GO" id="GO:0005840">
    <property type="term" value="C:ribosome"/>
    <property type="evidence" value="ECO:0007669"/>
    <property type="project" value="UniProtKB-KW"/>
</dbReference>
<dbReference type="GO" id="GO:0003735">
    <property type="term" value="F:structural constituent of ribosome"/>
    <property type="evidence" value="ECO:0007669"/>
    <property type="project" value="InterPro"/>
</dbReference>
<dbReference type="GO" id="GO:0006412">
    <property type="term" value="P:translation"/>
    <property type="evidence" value="ECO:0007669"/>
    <property type="project" value="UniProtKB-UniRule"/>
</dbReference>
<dbReference type="FunFam" id="4.10.410.60:FF:000001">
    <property type="entry name" value="50S ribosomal protein L35"/>
    <property type="match status" value="1"/>
</dbReference>
<dbReference type="Gene3D" id="4.10.410.60">
    <property type="match status" value="1"/>
</dbReference>
<dbReference type="HAMAP" id="MF_00514">
    <property type="entry name" value="Ribosomal_bL35"/>
    <property type="match status" value="1"/>
</dbReference>
<dbReference type="InterPro" id="IPR001706">
    <property type="entry name" value="Ribosomal_bL35"/>
</dbReference>
<dbReference type="InterPro" id="IPR021137">
    <property type="entry name" value="Ribosomal_bL35-like"/>
</dbReference>
<dbReference type="InterPro" id="IPR037229">
    <property type="entry name" value="Ribosomal_bL35_sf"/>
</dbReference>
<dbReference type="NCBIfam" id="TIGR00001">
    <property type="entry name" value="rpmI_bact"/>
    <property type="match status" value="1"/>
</dbReference>
<dbReference type="Pfam" id="PF01632">
    <property type="entry name" value="Ribosomal_L35p"/>
    <property type="match status" value="1"/>
</dbReference>
<dbReference type="PRINTS" id="PR00064">
    <property type="entry name" value="RIBOSOMALL35"/>
</dbReference>
<dbReference type="SUPFAM" id="SSF143034">
    <property type="entry name" value="L35p-like"/>
    <property type="match status" value="1"/>
</dbReference>
<sequence length="64" mass="7116">MPKMKTNSAASKRAKITGTGKVKHVGSAMRHNLEHKSARKRRELSADDVLRGGQAKKLHQLLQK</sequence>
<gene>
    <name evidence="1" type="primary">rpmI</name>
    <name type="ordered locus">Blon_0903</name>
    <name type="ordered locus">BLIJ_0920</name>
</gene>
<name>RL35_BIFLS</name>
<reference key="1">
    <citation type="journal article" date="2008" name="Proc. Natl. Acad. Sci. U.S.A.">
        <title>The genome sequence of Bifidobacterium longum subsp. infantis reveals adaptations for milk utilization within the infant microbiome.</title>
        <authorList>
            <person name="Sela D.A."/>
            <person name="Chapman J."/>
            <person name="Adeuya A."/>
            <person name="Kim J.H."/>
            <person name="Chen F."/>
            <person name="Whitehead T.R."/>
            <person name="Lapidus A."/>
            <person name="Rokhsar D.S."/>
            <person name="Lebrilla C.B."/>
            <person name="German J.B."/>
            <person name="Price N.P."/>
            <person name="Richardson P.M."/>
            <person name="Mills D.A."/>
        </authorList>
    </citation>
    <scope>NUCLEOTIDE SEQUENCE [LARGE SCALE GENOMIC DNA]</scope>
    <source>
        <strain>ATCC 15697 / DSM 20088 / JCM 1222 / NCTC 11817 / S12</strain>
    </source>
</reference>
<reference key="2">
    <citation type="journal article" date="2011" name="Nature">
        <title>Bifidobacteria can protect from enteropathogenic infection through production of acetate.</title>
        <authorList>
            <person name="Fukuda S."/>
            <person name="Toh H."/>
            <person name="Hase K."/>
            <person name="Oshima K."/>
            <person name="Nakanishi Y."/>
            <person name="Yoshimura K."/>
            <person name="Tobe T."/>
            <person name="Clarke J.M."/>
            <person name="Topping D.L."/>
            <person name="Suzuki T."/>
            <person name="Taylor T.D."/>
            <person name="Itoh K."/>
            <person name="Kikuchi J."/>
            <person name="Morita H."/>
            <person name="Hattori M."/>
            <person name="Ohno H."/>
        </authorList>
    </citation>
    <scope>NUCLEOTIDE SEQUENCE [LARGE SCALE GENOMIC DNA]</scope>
    <source>
        <strain>ATCC 15697 / DSM 20088 / JCM 1222 / NCTC 11817 / S12</strain>
    </source>
</reference>
<evidence type="ECO:0000255" key="1">
    <source>
        <dbReference type="HAMAP-Rule" id="MF_00514"/>
    </source>
</evidence>
<evidence type="ECO:0000256" key="2">
    <source>
        <dbReference type="SAM" id="MobiDB-lite"/>
    </source>
</evidence>
<evidence type="ECO:0000305" key="3"/>
<protein>
    <recommendedName>
        <fullName evidence="1">Large ribosomal subunit protein bL35</fullName>
    </recommendedName>
    <alternativeName>
        <fullName evidence="3">50S ribosomal protein L35</fullName>
    </alternativeName>
</protein>
<comment type="similarity">
    <text evidence="1">Belongs to the bacterial ribosomal protein bL35 family.</text>
</comment>
<proteinExistence type="inferred from homology"/>
<keyword id="KW-0687">Ribonucleoprotein</keyword>
<keyword id="KW-0689">Ribosomal protein</keyword>
<organism>
    <name type="scientific">Bifidobacterium longum subsp. infantis (strain ATCC 15697 / DSM 20088 / JCM 1222 / NCTC 11817 / S12)</name>
    <dbReference type="NCBI Taxonomy" id="391904"/>
    <lineage>
        <taxon>Bacteria</taxon>
        <taxon>Bacillati</taxon>
        <taxon>Actinomycetota</taxon>
        <taxon>Actinomycetes</taxon>
        <taxon>Bifidobacteriales</taxon>
        <taxon>Bifidobacteriaceae</taxon>
        <taxon>Bifidobacterium</taxon>
    </lineage>
</organism>